<sequence length="140" mass="15598">MLKEFKEFVSRGNVLDLAVGVIIGGAFTSIVKSLVNYLINPLIGLFIGGIDFSDWVLKVAGATFKFGSFINAVINFLIIAFVVFILVKLVNKFLPKKEEQEDDEAEAIENSEIYLKEIRDALVNNPELLSNLKNKEDSTK</sequence>
<gene>
    <name evidence="1" type="primary">mscL</name>
    <name type="ordered locus">PEPE_1812</name>
</gene>
<evidence type="ECO:0000255" key="1">
    <source>
        <dbReference type="HAMAP-Rule" id="MF_00115"/>
    </source>
</evidence>
<reference key="1">
    <citation type="journal article" date="2006" name="Proc. Natl. Acad. Sci. U.S.A.">
        <title>Comparative genomics of the lactic acid bacteria.</title>
        <authorList>
            <person name="Makarova K.S."/>
            <person name="Slesarev A."/>
            <person name="Wolf Y.I."/>
            <person name="Sorokin A."/>
            <person name="Mirkin B."/>
            <person name="Koonin E.V."/>
            <person name="Pavlov A."/>
            <person name="Pavlova N."/>
            <person name="Karamychev V."/>
            <person name="Polouchine N."/>
            <person name="Shakhova V."/>
            <person name="Grigoriev I."/>
            <person name="Lou Y."/>
            <person name="Rohksar D."/>
            <person name="Lucas S."/>
            <person name="Huang K."/>
            <person name="Goodstein D.M."/>
            <person name="Hawkins T."/>
            <person name="Plengvidhya V."/>
            <person name="Welker D."/>
            <person name="Hughes J."/>
            <person name="Goh Y."/>
            <person name="Benson A."/>
            <person name="Baldwin K."/>
            <person name="Lee J.-H."/>
            <person name="Diaz-Muniz I."/>
            <person name="Dosti B."/>
            <person name="Smeianov V."/>
            <person name="Wechter W."/>
            <person name="Barabote R."/>
            <person name="Lorca G."/>
            <person name="Altermann E."/>
            <person name="Barrangou R."/>
            <person name="Ganesan B."/>
            <person name="Xie Y."/>
            <person name="Rawsthorne H."/>
            <person name="Tamir D."/>
            <person name="Parker C."/>
            <person name="Breidt F."/>
            <person name="Broadbent J.R."/>
            <person name="Hutkins R."/>
            <person name="O'Sullivan D."/>
            <person name="Steele J."/>
            <person name="Unlu G."/>
            <person name="Saier M.H. Jr."/>
            <person name="Klaenhammer T."/>
            <person name="Richardson P."/>
            <person name="Kozyavkin S."/>
            <person name="Weimer B.C."/>
            <person name="Mills D.A."/>
        </authorList>
    </citation>
    <scope>NUCLEOTIDE SEQUENCE [LARGE SCALE GENOMIC DNA]</scope>
    <source>
        <strain>ATCC 25745 / CCUG 21536 / LMG 10740 / 183-1w</strain>
    </source>
</reference>
<protein>
    <recommendedName>
        <fullName evidence="1">Large-conductance mechanosensitive channel</fullName>
    </recommendedName>
</protein>
<keyword id="KW-1003">Cell membrane</keyword>
<keyword id="KW-0407">Ion channel</keyword>
<keyword id="KW-0406">Ion transport</keyword>
<keyword id="KW-0472">Membrane</keyword>
<keyword id="KW-0812">Transmembrane</keyword>
<keyword id="KW-1133">Transmembrane helix</keyword>
<keyword id="KW-0813">Transport</keyword>
<comment type="function">
    <text evidence="1">Channel that opens in response to stretch forces in the membrane lipid bilayer. May participate in the regulation of osmotic pressure changes within the cell.</text>
</comment>
<comment type="subunit">
    <text evidence="1">Homopentamer.</text>
</comment>
<comment type="subcellular location">
    <subcellularLocation>
        <location evidence="1">Cell membrane</location>
        <topology evidence="1">Multi-pass membrane protein</topology>
    </subcellularLocation>
</comment>
<comment type="similarity">
    <text evidence="1">Belongs to the MscL family.</text>
</comment>
<dbReference type="EMBL" id="CP000422">
    <property type="protein sequence ID" value="ABJ68831.1"/>
    <property type="molecule type" value="Genomic_DNA"/>
</dbReference>
<dbReference type="RefSeq" id="WP_002834294.1">
    <property type="nucleotide sequence ID" value="NC_008525.1"/>
</dbReference>
<dbReference type="STRING" id="278197.PEPE_1812"/>
<dbReference type="GeneID" id="33062202"/>
<dbReference type="KEGG" id="ppe:PEPE_1812"/>
<dbReference type="eggNOG" id="COG1970">
    <property type="taxonomic scope" value="Bacteria"/>
</dbReference>
<dbReference type="HOGENOM" id="CLU_095787_0_0_9"/>
<dbReference type="OrthoDB" id="9810350at2"/>
<dbReference type="Proteomes" id="UP000000773">
    <property type="component" value="Chromosome"/>
</dbReference>
<dbReference type="GO" id="GO:0005886">
    <property type="term" value="C:plasma membrane"/>
    <property type="evidence" value="ECO:0007669"/>
    <property type="project" value="UniProtKB-SubCell"/>
</dbReference>
<dbReference type="GO" id="GO:0008381">
    <property type="term" value="F:mechanosensitive monoatomic ion channel activity"/>
    <property type="evidence" value="ECO:0007669"/>
    <property type="project" value="UniProtKB-UniRule"/>
</dbReference>
<dbReference type="Gene3D" id="1.10.1200.120">
    <property type="entry name" value="Large-conductance mechanosensitive channel, MscL, domain 1"/>
    <property type="match status" value="1"/>
</dbReference>
<dbReference type="HAMAP" id="MF_00115">
    <property type="entry name" value="MscL"/>
    <property type="match status" value="1"/>
</dbReference>
<dbReference type="InterPro" id="IPR019823">
    <property type="entry name" value="Mechanosensitive_channel_CS"/>
</dbReference>
<dbReference type="InterPro" id="IPR001185">
    <property type="entry name" value="MS_channel"/>
</dbReference>
<dbReference type="InterPro" id="IPR037673">
    <property type="entry name" value="MSC/AndL"/>
</dbReference>
<dbReference type="InterPro" id="IPR036019">
    <property type="entry name" value="MscL_channel"/>
</dbReference>
<dbReference type="NCBIfam" id="TIGR00220">
    <property type="entry name" value="mscL"/>
    <property type="match status" value="1"/>
</dbReference>
<dbReference type="NCBIfam" id="NF001842">
    <property type="entry name" value="PRK00567.1-3"/>
    <property type="match status" value="1"/>
</dbReference>
<dbReference type="PANTHER" id="PTHR30266:SF2">
    <property type="entry name" value="LARGE-CONDUCTANCE MECHANOSENSITIVE CHANNEL"/>
    <property type="match status" value="1"/>
</dbReference>
<dbReference type="PANTHER" id="PTHR30266">
    <property type="entry name" value="MECHANOSENSITIVE CHANNEL MSCL"/>
    <property type="match status" value="1"/>
</dbReference>
<dbReference type="Pfam" id="PF01741">
    <property type="entry name" value="MscL"/>
    <property type="match status" value="1"/>
</dbReference>
<dbReference type="PRINTS" id="PR01264">
    <property type="entry name" value="MECHCHANNEL"/>
</dbReference>
<dbReference type="SUPFAM" id="SSF81330">
    <property type="entry name" value="Gated mechanosensitive channel"/>
    <property type="match status" value="1"/>
</dbReference>
<dbReference type="PROSITE" id="PS01327">
    <property type="entry name" value="MSCL"/>
    <property type="match status" value="1"/>
</dbReference>
<proteinExistence type="inferred from homology"/>
<name>MSCL_PEDPA</name>
<accession>Q03D91</accession>
<feature type="chain" id="PRO_1000015406" description="Large-conductance mechanosensitive channel">
    <location>
        <begin position="1"/>
        <end position="140"/>
    </location>
</feature>
<feature type="transmembrane region" description="Helical" evidence="1">
    <location>
        <begin position="14"/>
        <end position="34"/>
    </location>
</feature>
<feature type="transmembrane region" description="Helical" evidence="1">
    <location>
        <begin position="37"/>
        <end position="57"/>
    </location>
</feature>
<feature type="transmembrane region" description="Helical" evidence="1">
    <location>
        <begin position="66"/>
        <end position="86"/>
    </location>
</feature>
<organism>
    <name type="scientific">Pediococcus pentosaceus (strain ATCC 25745 / CCUG 21536 / LMG 10740 / 183-1w)</name>
    <dbReference type="NCBI Taxonomy" id="278197"/>
    <lineage>
        <taxon>Bacteria</taxon>
        <taxon>Bacillati</taxon>
        <taxon>Bacillota</taxon>
        <taxon>Bacilli</taxon>
        <taxon>Lactobacillales</taxon>
        <taxon>Lactobacillaceae</taxon>
        <taxon>Pediococcus</taxon>
    </lineage>
</organism>